<comment type="function">
    <text evidence="1">Catalyzes the first intracellular reaction of sulfate assimilation, forming adenosine-5'-phosphosulfate (APS) from inorganic sulfate and ATP. Plays an important role in sulfate activation as a component of the biosynthesis pathway of sulfur-containing amino acids.</text>
</comment>
<comment type="catalytic activity">
    <reaction evidence="1">
        <text>sulfate + ATP + H(+) = adenosine 5'-phosphosulfate + diphosphate</text>
        <dbReference type="Rhea" id="RHEA:18133"/>
        <dbReference type="ChEBI" id="CHEBI:15378"/>
        <dbReference type="ChEBI" id="CHEBI:16189"/>
        <dbReference type="ChEBI" id="CHEBI:30616"/>
        <dbReference type="ChEBI" id="CHEBI:33019"/>
        <dbReference type="ChEBI" id="CHEBI:58243"/>
        <dbReference type="EC" id="2.7.7.4"/>
    </reaction>
</comment>
<comment type="activity regulation">
    <text evidence="1">Allosterically inhibited by 3'-phosphoadenosine 5'-phosphosulfate (PAPS).</text>
</comment>
<comment type="pathway">
    <text evidence="1">Sulfur metabolism; hydrogen sulfide biosynthesis; sulfite from sulfate: step 1/3.</text>
</comment>
<comment type="subunit">
    <text evidence="1">Homohexamer. Dimer of trimers.</text>
</comment>
<comment type="subcellular location">
    <subcellularLocation>
        <location evidence="1">Cytoplasm</location>
    </subcellularLocation>
</comment>
<comment type="domain">
    <text evidence="1">The adenylyl-sulfate kinase (APS kinase) is non-functional. It is involved in allosteric regulation by PAPS. PAPS binding induces a large rotational rearrangement of domains lowering the substrate affinity of the enzyme.</text>
</comment>
<comment type="similarity">
    <text evidence="1">In the N-terminal section; belongs to the sulfate adenylyltransferase family.</text>
</comment>
<comment type="similarity">
    <text evidence="1">In the C-terminal section; belongs to the APS kinase family.</text>
</comment>
<sequence>MANSPHGGVLKDLLAGDAPRHDELAAEAETLPAIVLSERQLCDLELIMNGGFSPLEGFMTQKDFDGVCENCRLADGHLFSMPITLDASQQVISDSNLKPGSRVTLRDFRDDRNLAILTIEEKEAKLVFGGDPEHPAIKYFNTKVEDFYIGGKIEAVNKLNHYDYVALRYSPAELRVHFDKLGWTRVVAFQTRNPMHRAHRELTVRAARARQANVLIHPVVGLTKPGDIDHFTRVRAYQALLPRYPNGMAVLGLLPLAMRMGGPREAIWHAIIRKNHGATHFIVGRDHAGPGKNSKGEEFYGPYDAQHAVEKYREELGIEVVEFQQVTYLPDTDEYKPKDEVPAGIKTLDISGTELRNRLRTGAHIPEWFSYPEVVKILLRESSPPRATQGFTIFLTGYMNSGKDAIARALQVTLNQQGGRSVTLLLGDTVRHELSSELGFSAEDRHTNVQRIAFVAGELTRAGAAVIAAPIAPYERSRKAAREAVSGLGGSFFLVHVNTPLEYCEKTDKRGIYAKARRGEIKGFTGVDDPYEAPENADLVVDVSKQSVRSIVHEIILMLESEGYFDRL</sequence>
<proteinExistence type="inferred from homology"/>
<dbReference type="EC" id="2.7.7.4" evidence="1"/>
<dbReference type="EMBL" id="AF123267">
    <property type="protein sequence ID" value="AAF28890.1"/>
    <property type="molecule type" value="Genomic_DNA"/>
</dbReference>
<dbReference type="SMR" id="P56862"/>
<dbReference type="VEuPathDB" id="FungiDB:ATEG_08765"/>
<dbReference type="UniPathway" id="UPA00140">
    <property type="reaction ID" value="UER00204"/>
</dbReference>
<dbReference type="GO" id="GO:0005737">
    <property type="term" value="C:cytoplasm"/>
    <property type="evidence" value="ECO:0007669"/>
    <property type="project" value="UniProtKB-SubCell"/>
</dbReference>
<dbReference type="GO" id="GO:0004020">
    <property type="term" value="F:adenylylsulfate kinase activity"/>
    <property type="evidence" value="ECO:0007669"/>
    <property type="project" value="InterPro"/>
</dbReference>
<dbReference type="GO" id="GO:0005524">
    <property type="term" value="F:ATP binding"/>
    <property type="evidence" value="ECO:0007669"/>
    <property type="project" value="UniProtKB-KW"/>
</dbReference>
<dbReference type="GO" id="GO:0004781">
    <property type="term" value="F:sulfate adenylyltransferase (ATP) activity"/>
    <property type="evidence" value="ECO:0007669"/>
    <property type="project" value="UniProtKB-UniRule"/>
</dbReference>
<dbReference type="GO" id="GO:0019344">
    <property type="term" value="P:cysteine biosynthetic process"/>
    <property type="evidence" value="ECO:0007669"/>
    <property type="project" value="UniProtKB-KW"/>
</dbReference>
<dbReference type="GO" id="GO:0070814">
    <property type="term" value="P:hydrogen sulfide biosynthetic process"/>
    <property type="evidence" value="ECO:0007669"/>
    <property type="project" value="UniProtKB-UniRule"/>
</dbReference>
<dbReference type="GO" id="GO:0009086">
    <property type="term" value="P:methionine biosynthetic process"/>
    <property type="evidence" value="ECO:0007669"/>
    <property type="project" value="UniProtKB-KW"/>
</dbReference>
<dbReference type="GO" id="GO:0010134">
    <property type="term" value="P:sulfate assimilation via adenylyl sulfate reduction"/>
    <property type="evidence" value="ECO:0007669"/>
    <property type="project" value="TreeGrafter"/>
</dbReference>
<dbReference type="GO" id="GO:0019379">
    <property type="term" value="P:sulfate assimilation, phosphoadenylyl sulfate reduction by phosphoadenylyl-sulfate reductase (thioredoxin)"/>
    <property type="evidence" value="ECO:0007669"/>
    <property type="project" value="TreeGrafter"/>
</dbReference>
<dbReference type="CDD" id="cd02027">
    <property type="entry name" value="APSK"/>
    <property type="match status" value="1"/>
</dbReference>
<dbReference type="CDD" id="cd00517">
    <property type="entry name" value="ATPS"/>
    <property type="match status" value="1"/>
</dbReference>
<dbReference type="FunFam" id="3.10.400.10:FF:000003">
    <property type="entry name" value="Sulfate adenylyltransferase"/>
    <property type="match status" value="1"/>
</dbReference>
<dbReference type="FunFam" id="3.40.50.300:FF:000802">
    <property type="entry name" value="Sulfate adenylyltransferase"/>
    <property type="match status" value="1"/>
</dbReference>
<dbReference type="FunFam" id="3.40.50.620:FF:000052">
    <property type="entry name" value="Sulfate adenylyltransferase"/>
    <property type="match status" value="1"/>
</dbReference>
<dbReference type="Gene3D" id="3.40.50.620">
    <property type="entry name" value="HUPs"/>
    <property type="match status" value="1"/>
</dbReference>
<dbReference type="Gene3D" id="3.40.50.300">
    <property type="entry name" value="P-loop containing nucleotide triphosphate hydrolases"/>
    <property type="match status" value="1"/>
</dbReference>
<dbReference type="Gene3D" id="3.10.400.10">
    <property type="entry name" value="Sulfate adenylyltransferase"/>
    <property type="match status" value="1"/>
</dbReference>
<dbReference type="HAMAP" id="MF_03106">
    <property type="entry name" value="Sulf_adenylyltr_euk"/>
    <property type="match status" value="1"/>
</dbReference>
<dbReference type="InterPro" id="IPR002891">
    <property type="entry name" value="APS_kinase"/>
</dbReference>
<dbReference type="InterPro" id="IPR025980">
    <property type="entry name" value="ATP-Sase_PUA-like_dom"/>
</dbReference>
<dbReference type="InterPro" id="IPR027417">
    <property type="entry name" value="P-loop_NTPase"/>
</dbReference>
<dbReference type="InterPro" id="IPR015947">
    <property type="entry name" value="PUA-like_sf"/>
</dbReference>
<dbReference type="InterPro" id="IPR014729">
    <property type="entry name" value="Rossmann-like_a/b/a_fold"/>
</dbReference>
<dbReference type="InterPro" id="IPR027535">
    <property type="entry name" value="Sulf_adenylyltr_euk"/>
</dbReference>
<dbReference type="InterPro" id="IPR050512">
    <property type="entry name" value="Sulf_AdTrans/APS_kinase"/>
</dbReference>
<dbReference type="InterPro" id="IPR024951">
    <property type="entry name" value="Sulfurylase_cat_dom"/>
</dbReference>
<dbReference type="InterPro" id="IPR002650">
    <property type="entry name" value="Sulphate_adenylyltransferase"/>
</dbReference>
<dbReference type="NCBIfam" id="TIGR00455">
    <property type="entry name" value="apsK"/>
    <property type="match status" value="1"/>
</dbReference>
<dbReference type="NCBIfam" id="NF004040">
    <property type="entry name" value="PRK05537.1"/>
    <property type="match status" value="1"/>
</dbReference>
<dbReference type="NCBIfam" id="TIGR00339">
    <property type="entry name" value="sopT"/>
    <property type="match status" value="1"/>
</dbReference>
<dbReference type="PANTHER" id="PTHR42700">
    <property type="entry name" value="SULFATE ADENYLYLTRANSFERASE"/>
    <property type="match status" value="1"/>
</dbReference>
<dbReference type="PANTHER" id="PTHR42700:SF1">
    <property type="entry name" value="SULFATE ADENYLYLTRANSFERASE"/>
    <property type="match status" value="1"/>
</dbReference>
<dbReference type="Pfam" id="PF01583">
    <property type="entry name" value="APS_kinase"/>
    <property type="match status" value="1"/>
</dbReference>
<dbReference type="Pfam" id="PF01747">
    <property type="entry name" value="ATP-sulfurylase"/>
    <property type="match status" value="1"/>
</dbReference>
<dbReference type="Pfam" id="PF14306">
    <property type="entry name" value="PUA_2"/>
    <property type="match status" value="1"/>
</dbReference>
<dbReference type="SUPFAM" id="SSF52374">
    <property type="entry name" value="Nucleotidylyl transferase"/>
    <property type="match status" value="1"/>
</dbReference>
<dbReference type="SUPFAM" id="SSF52540">
    <property type="entry name" value="P-loop containing nucleoside triphosphate hydrolases"/>
    <property type="match status" value="1"/>
</dbReference>
<dbReference type="SUPFAM" id="SSF88697">
    <property type="entry name" value="PUA domain-like"/>
    <property type="match status" value="1"/>
</dbReference>
<protein>
    <recommendedName>
        <fullName evidence="1">Sulfate adenylyltransferase</fullName>
        <ecNumber evidence="1">2.7.7.4</ecNumber>
    </recommendedName>
    <alternativeName>
        <fullName evidence="1">ATP-sulfurylase</fullName>
    </alternativeName>
    <alternativeName>
        <fullName evidence="1">Sulfate adenylate transferase</fullName>
        <shortName evidence="1">SAT</shortName>
    </alternativeName>
</protein>
<gene>
    <name evidence="1" type="primary">met3</name>
    <name type="synonym">sCT</name>
</gene>
<reference key="1">
    <citation type="journal article" date="2000" name="Curr. Genet.">
        <title>Sulfate assimilation in Aspergillus terreus: analysis of genes encoding ATP-sulfurylase and PAPS-reductase.</title>
        <authorList>
            <person name="Schierova M."/>
            <person name="Linka M."/>
            <person name="Pazoutova S."/>
        </authorList>
    </citation>
    <scope>NUCLEOTIDE SEQUENCE [GENOMIC DNA]</scope>
    <source>
        <strain>ATCC 20542 / MF4845</strain>
    </source>
</reference>
<feature type="chain" id="PRO_0000105949" description="Sulfate adenylyltransferase">
    <location>
        <begin position="1"/>
        <end position="568"/>
    </location>
</feature>
<feature type="region of interest" description="N-terminal" evidence="1">
    <location>
        <begin position="1"/>
        <end position="162"/>
    </location>
</feature>
<feature type="region of interest" description="Catalytic" evidence="1">
    <location>
        <begin position="163"/>
        <end position="388"/>
    </location>
</feature>
<feature type="region of interest" description="Allosteric regulation domain; adenylyl-sulfate kinase-like" evidence="1">
    <location>
        <begin position="389"/>
        <end position="568"/>
    </location>
</feature>
<feature type="active site" evidence="1">
    <location>
        <position position="191"/>
    </location>
</feature>
<feature type="active site" evidence="1">
    <location>
        <position position="192"/>
    </location>
</feature>
<feature type="active site" evidence="1">
    <location>
        <position position="193"/>
    </location>
</feature>
<feature type="binding site" evidence="1">
    <location>
        <begin position="190"/>
        <end position="193"/>
    </location>
    <ligand>
        <name>ATP</name>
        <dbReference type="ChEBI" id="CHEBI:30616"/>
    </ligand>
</feature>
<feature type="binding site" evidence="1">
    <location>
        <position position="190"/>
    </location>
    <ligand>
        <name>sulfate</name>
        <dbReference type="ChEBI" id="CHEBI:16189"/>
    </ligand>
</feature>
<feature type="binding site" evidence="1">
    <location>
        <position position="192"/>
    </location>
    <ligand>
        <name>sulfate</name>
        <dbReference type="ChEBI" id="CHEBI:16189"/>
    </ligand>
</feature>
<feature type="binding site" evidence="1">
    <location>
        <begin position="284"/>
        <end position="287"/>
    </location>
    <ligand>
        <name>ATP</name>
        <dbReference type="ChEBI" id="CHEBI:30616"/>
    </ligand>
</feature>
<feature type="binding site" evidence="1">
    <location>
        <position position="288"/>
    </location>
    <ligand>
        <name>sulfate</name>
        <dbReference type="ChEBI" id="CHEBI:16189"/>
    </ligand>
</feature>
<feature type="binding site" evidence="1">
    <location>
        <position position="326"/>
    </location>
    <ligand>
        <name>ATP</name>
        <dbReference type="ChEBI" id="CHEBI:30616"/>
    </ligand>
</feature>
<feature type="binding site" evidence="1">
    <location>
        <begin position="428"/>
        <end position="431"/>
    </location>
    <ligand>
        <name>3'-phosphoadenylyl sulfate</name>
        <dbReference type="ChEBI" id="CHEBI:58339"/>
        <note>allosteric inhibitor</note>
    </ligand>
</feature>
<feature type="binding site" evidence="1">
    <location>
        <position position="445"/>
    </location>
    <ligand>
        <name>3'-phosphoadenylyl sulfate</name>
        <dbReference type="ChEBI" id="CHEBI:58339"/>
        <note>allosteric inhibitor</note>
    </ligand>
</feature>
<feature type="binding site" evidence="1">
    <location>
        <begin position="471"/>
        <end position="472"/>
    </location>
    <ligand>
        <name>3'-phosphoadenylyl sulfate</name>
        <dbReference type="ChEBI" id="CHEBI:58339"/>
        <note>allosteric inhibitor</note>
    </ligand>
</feature>
<feature type="binding site" evidence="1">
    <location>
        <position position="510"/>
    </location>
    <ligand>
        <name>3'-phosphoadenylyl sulfate</name>
        <dbReference type="ChEBI" id="CHEBI:58339"/>
        <note>allosteric inhibitor</note>
    </ligand>
</feature>
<feature type="site" description="Transition state stabilizer" evidence="1">
    <location>
        <position position="196"/>
    </location>
</feature>
<feature type="site" description="Transition state stabilizer" evidence="1">
    <location>
        <position position="199"/>
    </location>
</feature>
<feature type="site" description="Induces change in substrate recognition on ATP binding" evidence="1">
    <location>
        <position position="323"/>
    </location>
</feature>
<name>MET3_ASPTE</name>
<evidence type="ECO:0000255" key="1">
    <source>
        <dbReference type="HAMAP-Rule" id="MF_03106"/>
    </source>
</evidence>
<organism>
    <name type="scientific">Aspergillus terreus</name>
    <dbReference type="NCBI Taxonomy" id="33178"/>
    <lineage>
        <taxon>Eukaryota</taxon>
        <taxon>Fungi</taxon>
        <taxon>Dikarya</taxon>
        <taxon>Ascomycota</taxon>
        <taxon>Pezizomycotina</taxon>
        <taxon>Eurotiomycetes</taxon>
        <taxon>Eurotiomycetidae</taxon>
        <taxon>Eurotiales</taxon>
        <taxon>Aspergillaceae</taxon>
        <taxon>Aspergillus</taxon>
        <taxon>Aspergillus subgen. Circumdati</taxon>
    </lineage>
</organism>
<accession>P56862</accession>
<keyword id="KW-0021">Allosteric enzyme</keyword>
<keyword id="KW-0028">Amino-acid biosynthesis</keyword>
<keyword id="KW-0067">ATP-binding</keyword>
<keyword id="KW-0198">Cysteine biosynthesis</keyword>
<keyword id="KW-0963">Cytoplasm</keyword>
<keyword id="KW-0486">Methionine biosynthesis</keyword>
<keyword id="KW-0547">Nucleotide-binding</keyword>
<keyword id="KW-0548">Nucleotidyltransferase</keyword>
<keyword id="KW-0808">Transferase</keyword>